<feature type="chain" id="PRO_0000414013" description="Clathrin light chain 2">
    <location>
        <begin position="1"/>
        <end position="291"/>
    </location>
</feature>
<feature type="region of interest" description="Disordered" evidence="3">
    <location>
        <begin position="1"/>
        <end position="91"/>
    </location>
</feature>
<feature type="region of interest" description="Involved in binding clathrin heavy chain" evidence="1">
    <location>
        <begin position="84"/>
        <end position="146"/>
    </location>
</feature>
<feature type="region of interest" description="Disordered" evidence="3">
    <location>
        <begin position="183"/>
        <end position="291"/>
    </location>
</feature>
<feature type="coiled-coil region" evidence="2">
    <location>
        <begin position="93"/>
        <end position="120"/>
    </location>
</feature>
<feature type="compositionally biased region" description="Polar residues" evidence="3">
    <location>
        <begin position="1"/>
        <end position="12"/>
    </location>
</feature>
<feature type="compositionally biased region" description="Pro residues" evidence="3">
    <location>
        <begin position="31"/>
        <end position="43"/>
    </location>
</feature>
<feature type="compositionally biased region" description="Basic and acidic residues" evidence="3">
    <location>
        <begin position="183"/>
        <end position="197"/>
    </location>
</feature>
<feature type="compositionally biased region" description="Pro residues" evidence="3">
    <location>
        <begin position="228"/>
        <end position="238"/>
    </location>
</feature>
<feature type="compositionally biased region" description="Low complexity" evidence="3">
    <location>
        <begin position="253"/>
        <end position="267"/>
    </location>
</feature>
<feature type="compositionally biased region" description="Low complexity" evidence="3">
    <location>
        <begin position="274"/>
        <end position="291"/>
    </location>
</feature>
<keyword id="KW-0168">Coated pit</keyword>
<keyword id="KW-0175">Coiled coil</keyword>
<keyword id="KW-0968">Cytoplasmic vesicle</keyword>
<keyword id="KW-0472">Membrane</keyword>
<keyword id="KW-1185">Reference proteome</keyword>
<sequence length="291" mass="31290">MATAFDSPTASPAASPFDDDSFLRFDAAAPAPAPADAFPPSPEPYAFRPDAPSPFGMPEANGSLHDDPFAAPDNDNGPVLPPPNQMGADEGFLLREWRRQNAILLEEKEKKEKEMRNQIILDAKEFKKAFVEKRKLNVETSKDQNREREKLYLANQEKFHAGADKQYWKAISELIPHEIANIEKRGAKKDKDKEKKPGIVVIQGPKPGKPTDMSRMRQILLKLKHTPPPHMKPPPPPAAATGKDGAAGKDGAKVAAAASKDASANGSVPEMEKAAAAAAPAAAATEPIAAA</sequence>
<comment type="function">
    <text>Clathrin is the major protein of the polyhedral coat of coated pits and vesicles.</text>
</comment>
<comment type="subunit">
    <text evidence="1">Clathrin coats are formed from molecules containing 3 heavy chains and 3 light chains.</text>
</comment>
<comment type="subcellular location">
    <subcellularLocation>
        <location evidence="1">Cytoplasmic vesicle membrane</location>
        <topology evidence="1">Peripheral membrane protein</topology>
        <orientation evidence="1">Cytoplasmic side</orientation>
    </subcellularLocation>
    <subcellularLocation>
        <location evidence="1">Membrane</location>
        <location evidence="1">Coated pit</location>
        <topology evidence="1">Peripheral membrane protein</topology>
        <orientation evidence="1">Cytoplasmic side</orientation>
    </subcellularLocation>
    <text evidence="1">Cytoplasmic face of coated pits and vesicles.</text>
</comment>
<comment type="similarity">
    <text evidence="4">Belongs to the clathrin light chain family.</text>
</comment>
<accession>Q5Z402</accession>
<accession>A0A0P0X1I4</accession>
<name>CLC2_ORYSJ</name>
<protein>
    <recommendedName>
        <fullName>Clathrin light chain 2</fullName>
    </recommendedName>
</protein>
<dbReference type="EMBL" id="AP006616">
    <property type="protein sequence ID" value="BAD62498.1"/>
    <property type="molecule type" value="Genomic_DNA"/>
</dbReference>
<dbReference type="EMBL" id="AP008212">
    <property type="protein sequence ID" value="BAF20580.1"/>
    <property type="molecule type" value="Genomic_DNA"/>
</dbReference>
<dbReference type="EMBL" id="AP014962">
    <property type="protein sequence ID" value="BAS99661.1"/>
    <property type="molecule type" value="Genomic_DNA"/>
</dbReference>
<dbReference type="EMBL" id="CM000143">
    <property type="protein sequence ID" value="EEE66409.1"/>
    <property type="molecule type" value="Genomic_DNA"/>
</dbReference>
<dbReference type="EMBL" id="AK069288">
    <property type="protein sequence ID" value="BAG91360.1"/>
    <property type="molecule type" value="mRNA"/>
</dbReference>
<dbReference type="RefSeq" id="XP_015644113.1">
    <property type="nucleotide sequence ID" value="XM_015788627.1"/>
</dbReference>
<dbReference type="SMR" id="Q5Z402"/>
<dbReference type="FunCoup" id="Q5Z402">
    <property type="interactions" value="1822"/>
</dbReference>
<dbReference type="STRING" id="39947.Q5Z402"/>
<dbReference type="PaxDb" id="39947-Q5Z402"/>
<dbReference type="EnsemblPlants" id="Os06t0731800-01">
    <property type="protein sequence ID" value="Os06t0731800-01"/>
    <property type="gene ID" value="Os06g0731800"/>
</dbReference>
<dbReference type="Gramene" id="Os06t0731800-01">
    <property type="protein sequence ID" value="Os06t0731800-01"/>
    <property type="gene ID" value="Os06g0731800"/>
</dbReference>
<dbReference type="KEGG" id="dosa:Os06g0731800"/>
<dbReference type="eggNOG" id="ENOG502QVX7">
    <property type="taxonomic scope" value="Eukaryota"/>
</dbReference>
<dbReference type="HOGENOM" id="CLU_053778_2_0_1"/>
<dbReference type="InParanoid" id="Q5Z402"/>
<dbReference type="OMA" id="LREWRHQ"/>
<dbReference type="OrthoDB" id="782264at2759"/>
<dbReference type="Proteomes" id="UP000000763">
    <property type="component" value="Chromosome 6"/>
</dbReference>
<dbReference type="Proteomes" id="UP000007752">
    <property type="component" value="Chromosome 6"/>
</dbReference>
<dbReference type="Proteomes" id="UP000059680">
    <property type="component" value="Chromosome 6"/>
</dbReference>
<dbReference type="GO" id="GO:0030132">
    <property type="term" value="C:clathrin coat of coated pit"/>
    <property type="evidence" value="ECO:0007669"/>
    <property type="project" value="InterPro"/>
</dbReference>
<dbReference type="GO" id="GO:0030130">
    <property type="term" value="C:clathrin coat of trans-Golgi network vesicle"/>
    <property type="evidence" value="ECO:0007669"/>
    <property type="project" value="InterPro"/>
</dbReference>
<dbReference type="GO" id="GO:0030125">
    <property type="term" value="C:clathrin vesicle coat"/>
    <property type="evidence" value="ECO:0000318"/>
    <property type="project" value="GO_Central"/>
</dbReference>
<dbReference type="GO" id="GO:0005886">
    <property type="term" value="C:plasma membrane"/>
    <property type="evidence" value="ECO:0000318"/>
    <property type="project" value="GO_Central"/>
</dbReference>
<dbReference type="GO" id="GO:0032050">
    <property type="term" value="F:clathrin heavy chain binding"/>
    <property type="evidence" value="ECO:0000318"/>
    <property type="project" value="GO_Central"/>
</dbReference>
<dbReference type="GO" id="GO:0005198">
    <property type="term" value="F:structural molecule activity"/>
    <property type="evidence" value="ECO:0007669"/>
    <property type="project" value="InterPro"/>
</dbReference>
<dbReference type="GO" id="GO:0072583">
    <property type="term" value="P:clathrin-dependent endocytosis"/>
    <property type="evidence" value="ECO:0000318"/>
    <property type="project" value="GO_Central"/>
</dbReference>
<dbReference type="GO" id="GO:0006886">
    <property type="term" value="P:intracellular protein transport"/>
    <property type="evidence" value="ECO:0007669"/>
    <property type="project" value="InterPro"/>
</dbReference>
<dbReference type="InterPro" id="IPR000996">
    <property type="entry name" value="Clathrin_L-chain"/>
</dbReference>
<dbReference type="PANTHER" id="PTHR10639">
    <property type="entry name" value="CLATHRIN LIGHT CHAIN"/>
    <property type="match status" value="1"/>
</dbReference>
<dbReference type="PANTHER" id="PTHR10639:SF7">
    <property type="entry name" value="CLATHRIN LIGHT CHAIN"/>
    <property type="match status" value="1"/>
</dbReference>
<dbReference type="Pfam" id="PF01086">
    <property type="entry name" value="Clathrin_lg_ch"/>
    <property type="match status" value="1"/>
</dbReference>
<reference key="1">
    <citation type="journal article" date="2005" name="Nature">
        <title>The map-based sequence of the rice genome.</title>
        <authorList>
            <consortium name="International rice genome sequencing project (IRGSP)"/>
        </authorList>
    </citation>
    <scope>NUCLEOTIDE SEQUENCE [LARGE SCALE GENOMIC DNA]</scope>
    <source>
        <strain>cv. Nipponbare</strain>
    </source>
</reference>
<reference key="2">
    <citation type="journal article" date="2008" name="Nucleic Acids Res.">
        <title>The rice annotation project database (RAP-DB): 2008 update.</title>
        <authorList>
            <consortium name="The rice annotation project (RAP)"/>
        </authorList>
    </citation>
    <scope>GENOME REANNOTATION</scope>
    <source>
        <strain>cv. Nipponbare</strain>
    </source>
</reference>
<reference key="3">
    <citation type="journal article" date="2013" name="Rice">
        <title>Improvement of the Oryza sativa Nipponbare reference genome using next generation sequence and optical map data.</title>
        <authorList>
            <person name="Kawahara Y."/>
            <person name="de la Bastide M."/>
            <person name="Hamilton J.P."/>
            <person name="Kanamori H."/>
            <person name="McCombie W.R."/>
            <person name="Ouyang S."/>
            <person name="Schwartz D.C."/>
            <person name="Tanaka T."/>
            <person name="Wu J."/>
            <person name="Zhou S."/>
            <person name="Childs K.L."/>
            <person name="Davidson R.M."/>
            <person name="Lin H."/>
            <person name="Quesada-Ocampo L."/>
            <person name="Vaillancourt B."/>
            <person name="Sakai H."/>
            <person name="Lee S.S."/>
            <person name="Kim J."/>
            <person name="Numa H."/>
            <person name="Itoh T."/>
            <person name="Buell C.R."/>
            <person name="Matsumoto T."/>
        </authorList>
    </citation>
    <scope>GENOME REANNOTATION</scope>
    <source>
        <strain>cv. Nipponbare</strain>
    </source>
</reference>
<reference key="4">
    <citation type="journal article" date="2005" name="PLoS Biol.">
        <title>The genomes of Oryza sativa: a history of duplications.</title>
        <authorList>
            <person name="Yu J."/>
            <person name="Wang J."/>
            <person name="Lin W."/>
            <person name="Li S."/>
            <person name="Li H."/>
            <person name="Zhou J."/>
            <person name="Ni P."/>
            <person name="Dong W."/>
            <person name="Hu S."/>
            <person name="Zeng C."/>
            <person name="Zhang J."/>
            <person name="Zhang Y."/>
            <person name="Li R."/>
            <person name="Xu Z."/>
            <person name="Li S."/>
            <person name="Li X."/>
            <person name="Zheng H."/>
            <person name="Cong L."/>
            <person name="Lin L."/>
            <person name="Yin J."/>
            <person name="Geng J."/>
            <person name="Li G."/>
            <person name="Shi J."/>
            <person name="Liu J."/>
            <person name="Lv H."/>
            <person name="Li J."/>
            <person name="Wang J."/>
            <person name="Deng Y."/>
            <person name="Ran L."/>
            <person name="Shi X."/>
            <person name="Wang X."/>
            <person name="Wu Q."/>
            <person name="Li C."/>
            <person name="Ren X."/>
            <person name="Wang J."/>
            <person name="Wang X."/>
            <person name="Li D."/>
            <person name="Liu D."/>
            <person name="Zhang X."/>
            <person name="Ji Z."/>
            <person name="Zhao W."/>
            <person name="Sun Y."/>
            <person name="Zhang Z."/>
            <person name="Bao J."/>
            <person name="Han Y."/>
            <person name="Dong L."/>
            <person name="Ji J."/>
            <person name="Chen P."/>
            <person name="Wu S."/>
            <person name="Liu J."/>
            <person name="Xiao Y."/>
            <person name="Bu D."/>
            <person name="Tan J."/>
            <person name="Yang L."/>
            <person name="Ye C."/>
            <person name="Zhang J."/>
            <person name="Xu J."/>
            <person name="Zhou Y."/>
            <person name="Yu Y."/>
            <person name="Zhang B."/>
            <person name="Zhuang S."/>
            <person name="Wei H."/>
            <person name="Liu B."/>
            <person name="Lei M."/>
            <person name="Yu H."/>
            <person name="Li Y."/>
            <person name="Xu H."/>
            <person name="Wei S."/>
            <person name="He X."/>
            <person name="Fang L."/>
            <person name="Zhang Z."/>
            <person name="Zhang Y."/>
            <person name="Huang X."/>
            <person name="Su Z."/>
            <person name="Tong W."/>
            <person name="Li J."/>
            <person name="Tong Z."/>
            <person name="Li S."/>
            <person name="Ye J."/>
            <person name="Wang L."/>
            <person name="Fang L."/>
            <person name="Lei T."/>
            <person name="Chen C.-S."/>
            <person name="Chen H.-C."/>
            <person name="Xu Z."/>
            <person name="Li H."/>
            <person name="Huang H."/>
            <person name="Zhang F."/>
            <person name="Xu H."/>
            <person name="Li N."/>
            <person name="Zhao C."/>
            <person name="Li S."/>
            <person name="Dong L."/>
            <person name="Huang Y."/>
            <person name="Li L."/>
            <person name="Xi Y."/>
            <person name="Qi Q."/>
            <person name="Li W."/>
            <person name="Zhang B."/>
            <person name="Hu W."/>
            <person name="Zhang Y."/>
            <person name="Tian X."/>
            <person name="Jiao Y."/>
            <person name="Liang X."/>
            <person name="Jin J."/>
            <person name="Gao L."/>
            <person name="Zheng W."/>
            <person name="Hao B."/>
            <person name="Liu S.-M."/>
            <person name="Wang W."/>
            <person name="Yuan L."/>
            <person name="Cao M."/>
            <person name="McDermott J."/>
            <person name="Samudrala R."/>
            <person name="Wang J."/>
            <person name="Wong G.K.-S."/>
            <person name="Yang H."/>
        </authorList>
    </citation>
    <scope>NUCLEOTIDE SEQUENCE [LARGE SCALE GENOMIC DNA]</scope>
    <source>
        <strain>cv. Nipponbare</strain>
    </source>
</reference>
<reference key="5">
    <citation type="journal article" date="2003" name="Science">
        <title>Collection, mapping, and annotation of over 28,000 cDNA clones from japonica rice.</title>
        <authorList>
            <consortium name="The rice full-length cDNA consortium"/>
        </authorList>
    </citation>
    <scope>NUCLEOTIDE SEQUENCE [LARGE SCALE MRNA]</scope>
    <source>
        <strain>cv. Nipponbare</strain>
    </source>
</reference>
<proteinExistence type="evidence at transcript level"/>
<organism>
    <name type="scientific">Oryza sativa subsp. japonica</name>
    <name type="common">Rice</name>
    <dbReference type="NCBI Taxonomy" id="39947"/>
    <lineage>
        <taxon>Eukaryota</taxon>
        <taxon>Viridiplantae</taxon>
        <taxon>Streptophyta</taxon>
        <taxon>Embryophyta</taxon>
        <taxon>Tracheophyta</taxon>
        <taxon>Spermatophyta</taxon>
        <taxon>Magnoliopsida</taxon>
        <taxon>Liliopsida</taxon>
        <taxon>Poales</taxon>
        <taxon>Poaceae</taxon>
        <taxon>BOP clade</taxon>
        <taxon>Oryzoideae</taxon>
        <taxon>Oryzeae</taxon>
        <taxon>Oryzinae</taxon>
        <taxon>Oryza</taxon>
        <taxon>Oryza sativa</taxon>
    </lineage>
</organism>
<evidence type="ECO:0000250" key="1"/>
<evidence type="ECO:0000255" key="2"/>
<evidence type="ECO:0000256" key="3">
    <source>
        <dbReference type="SAM" id="MobiDB-lite"/>
    </source>
</evidence>
<evidence type="ECO:0000305" key="4"/>
<gene>
    <name type="ordered locus">Os06g0731800</name>
    <name type="ordered locus">LOC_Os06g51510</name>
    <name type="ORF">B1206D04.26</name>
    <name type="ORF">OsJ_22754</name>
</gene>